<gene>
    <name type="primary">SPP1</name>
    <name type="synonym">OPN</name>
</gene>
<accession>P14287</accession>
<keyword id="KW-0091">Biomineralization</keyword>
<keyword id="KW-0130">Cell adhesion</keyword>
<keyword id="KW-0202">Cytokine</keyword>
<keyword id="KW-0903">Direct protein sequencing</keyword>
<keyword id="KW-0325">Glycoprotein</keyword>
<keyword id="KW-0597">Phosphoprotein</keyword>
<keyword id="KW-0654">Proteoglycan</keyword>
<keyword id="KW-1185">Reference proteome</keyword>
<keyword id="KW-0964">Secreted</keyword>
<keyword id="KW-0730">Sialic acid</keyword>
<keyword id="KW-0732">Signal</keyword>
<name>OSTP_PIG</name>
<proteinExistence type="evidence at protein level"/>
<dbReference type="EMBL" id="X16575">
    <property type="protein sequence ID" value="CAA34594.1"/>
    <property type="molecule type" value="mRNA"/>
</dbReference>
<dbReference type="EMBL" id="M84121">
    <property type="protein sequence ID" value="AAA31094.1"/>
    <property type="molecule type" value="Genomic_DNA"/>
</dbReference>
<dbReference type="PIR" id="S14903">
    <property type="entry name" value="GEPGO"/>
</dbReference>
<dbReference type="RefSeq" id="NP_999188.1">
    <property type="nucleotide sequence ID" value="NM_214023.1"/>
</dbReference>
<dbReference type="RefSeq" id="XP_005667061.1">
    <property type="nucleotide sequence ID" value="XM_005667004.3"/>
</dbReference>
<dbReference type="RefSeq" id="XP_020956123.1">
    <property type="nucleotide sequence ID" value="XM_021100464.1"/>
</dbReference>
<dbReference type="FunCoup" id="P14287">
    <property type="interactions" value="237"/>
</dbReference>
<dbReference type="STRING" id="9823.ENSSSCP00000009825"/>
<dbReference type="GlyCosmos" id="P14287">
    <property type="glycosylation" value="5 sites, No reported glycans"/>
</dbReference>
<dbReference type="GlyGen" id="P14287">
    <property type="glycosylation" value="7 sites"/>
</dbReference>
<dbReference type="PaxDb" id="9823-ENSSSCP00000009825"/>
<dbReference type="PeptideAtlas" id="P14287"/>
<dbReference type="Ensembl" id="ENSSSCT00000010091.5">
    <property type="protein sequence ID" value="ENSSSCP00000009825.2"/>
    <property type="gene ID" value="ENSSSCG00000009216.6"/>
</dbReference>
<dbReference type="Ensembl" id="ENSSSCT00025053980.1">
    <property type="protein sequence ID" value="ENSSSCP00025023011.1"/>
    <property type="gene ID" value="ENSSSCG00025039675.1"/>
</dbReference>
<dbReference type="Ensembl" id="ENSSSCT00035084076.1">
    <property type="protein sequence ID" value="ENSSSCP00035034940.1"/>
    <property type="gene ID" value="ENSSSCG00035062546.1"/>
</dbReference>
<dbReference type="Ensembl" id="ENSSSCT00055051287.1">
    <property type="protein sequence ID" value="ENSSSCP00055041003.1"/>
    <property type="gene ID" value="ENSSSCG00055025973.1"/>
</dbReference>
<dbReference type="Ensembl" id="ENSSSCT00055051444.1">
    <property type="protein sequence ID" value="ENSSSCP00055041120.1"/>
    <property type="gene ID" value="ENSSSCG00055025973.1"/>
</dbReference>
<dbReference type="Ensembl" id="ENSSSCT00065050638.1">
    <property type="protein sequence ID" value="ENSSSCP00065021942.1"/>
    <property type="gene ID" value="ENSSSCG00065037058.1"/>
</dbReference>
<dbReference type="Ensembl" id="ENSSSCT00090042970">
    <property type="protein sequence ID" value="ENSSSCP00090026869"/>
    <property type="gene ID" value="ENSSSCG00090024215"/>
</dbReference>
<dbReference type="Ensembl" id="ENSSSCT00115020945">
    <property type="protein sequence ID" value="ENSSSCP00115019842"/>
    <property type="gene ID" value="ENSSSCG00115012020"/>
</dbReference>
<dbReference type="GeneID" id="397087"/>
<dbReference type="KEGG" id="ssc:397087"/>
<dbReference type="CTD" id="6696"/>
<dbReference type="VGNC" id="VGNC:93419">
    <property type="gene designation" value="SPP1"/>
</dbReference>
<dbReference type="eggNOG" id="ENOG502S5R4">
    <property type="taxonomic scope" value="Eukaryota"/>
</dbReference>
<dbReference type="GeneTree" id="ENSGT00390000002509"/>
<dbReference type="HOGENOM" id="CLU_953033_0_0_1"/>
<dbReference type="InParanoid" id="P14287"/>
<dbReference type="OMA" id="HSAEDHH"/>
<dbReference type="OrthoDB" id="9047304at2759"/>
<dbReference type="TreeFam" id="TF350201"/>
<dbReference type="Reactome" id="R-SSC-1474228">
    <property type="pathway name" value="Degradation of the extracellular matrix"/>
</dbReference>
<dbReference type="Reactome" id="R-SSC-186797">
    <property type="pathway name" value="Signaling by PDGF"/>
</dbReference>
<dbReference type="Reactome" id="R-SSC-216083">
    <property type="pathway name" value="Integrin cell surface interactions"/>
</dbReference>
<dbReference type="Reactome" id="R-SSC-381426">
    <property type="pathway name" value="Regulation of Insulin-like Growth Factor (IGF) transport and uptake by Insulin-like Growth Factor Binding Proteins (IGFBPs)"/>
</dbReference>
<dbReference type="Reactome" id="R-SSC-8957275">
    <property type="pathway name" value="Post-translational protein phosphorylation"/>
</dbReference>
<dbReference type="Proteomes" id="UP000008227">
    <property type="component" value="Chromosome 8"/>
</dbReference>
<dbReference type="Proteomes" id="UP000314985">
    <property type="component" value="Unplaced"/>
</dbReference>
<dbReference type="Proteomes" id="UP000694570">
    <property type="component" value="Unplaced"/>
</dbReference>
<dbReference type="Proteomes" id="UP000694571">
    <property type="component" value="Unplaced"/>
</dbReference>
<dbReference type="Proteomes" id="UP000694720">
    <property type="component" value="Unplaced"/>
</dbReference>
<dbReference type="Proteomes" id="UP000694722">
    <property type="component" value="Unplaced"/>
</dbReference>
<dbReference type="Proteomes" id="UP000694723">
    <property type="component" value="Unplaced"/>
</dbReference>
<dbReference type="Proteomes" id="UP000694724">
    <property type="component" value="Unplaced"/>
</dbReference>
<dbReference type="Proteomes" id="UP000694725">
    <property type="component" value="Unplaced"/>
</dbReference>
<dbReference type="Proteomes" id="UP000694726">
    <property type="component" value="Unplaced"/>
</dbReference>
<dbReference type="Proteomes" id="UP000694727">
    <property type="component" value="Unplaced"/>
</dbReference>
<dbReference type="Proteomes" id="UP000694728">
    <property type="component" value="Unplaced"/>
</dbReference>
<dbReference type="Bgee" id="ENSSSCG00000009216">
    <property type="expression patterns" value="Expressed in pons and 43 other cell types or tissues"/>
</dbReference>
<dbReference type="ExpressionAtlas" id="P14287">
    <property type="expression patterns" value="baseline and differential"/>
</dbReference>
<dbReference type="GO" id="GO:0005615">
    <property type="term" value="C:extracellular space"/>
    <property type="evidence" value="ECO:0000318"/>
    <property type="project" value="GO_Central"/>
</dbReference>
<dbReference type="GO" id="GO:0005794">
    <property type="term" value="C:Golgi apparatus"/>
    <property type="evidence" value="ECO:0007669"/>
    <property type="project" value="Ensembl"/>
</dbReference>
<dbReference type="GO" id="GO:0005125">
    <property type="term" value="F:cytokine activity"/>
    <property type="evidence" value="ECO:0007669"/>
    <property type="project" value="UniProtKB-KW"/>
</dbReference>
<dbReference type="GO" id="GO:0050840">
    <property type="term" value="F:extracellular matrix binding"/>
    <property type="evidence" value="ECO:0000318"/>
    <property type="project" value="GO_Central"/>
</dbReference>
<dbReference type="GO" id="GO:0005178">
    <property type="term" value="F:integrin binding"/>
    <property type="evidence" value="ECO:0000250"/>
    <property type="project" value="UniProtKB"/>
</dbReference>
<dbReference type="GO" id="GO:0006710">
    <property type="term" value="P:androgen catabolic process"/>
    <property type="evidence" value="ECO:0007669"/>
    <property type="project" value="Ensembl"/>
</dbReference>
<dbReference type="GO" id="GO:0031214">
    <property type="term" value="P:biomineral tissue development"/>
    <property type="evidence" value="ECO:0007669"/>
    <property type="project" value="UniProtKB-KW"/>
</dbReference>
<dbReference type="GO" id="GO:0007155">
    <property type="term" value="P:cell adhesion"/>
    <property type="evidence" value="ECO:0000318"/>
    <property type="project" value="GO_Central"/>
</dbReference>
<dbReference type="GO" id="GO:0071394">
    <property type="term" value="P:cellular response to testosterone stimulus"/>
    <property type="evidence" value="ECO:0007669"/>
    <property type="project" value="Ensembl"/>
</dbReference>
<dbReference type="GO" id="GO:0001649">
    <property type="term" value="P:osteoblast differentiation"/>
    <property type="evidence" value="ECO:0000318"/>
    <property type="project" value="GO_Central"/>
</dbReference>
<dbReference type="GO" id="GO:0045780">
    <property type="term" value="P:positive regulation of bone resorption"/>
    <property type="evidence" value="ECO:0000318"/>
    <property type="project" value="GO_Central"/>
</dbReference>
<dbReference type="GO" id="GO:0045893">
    <property type="term" value="P:positive regulation of DNA-templated transcription"/>
    <property type="evidence" value="ECO:0007669"/>
    <property type="project" value="Ensembl"/>
</dbReference>
<dbReference type="GO" id="GO:2000866">
    <property type="term" value="P:positive regulation of estradiol secretion"/>
    <property type="evidence" value="ECO:0007669"/>
    <property type="project" value="Ensembl"/>
</dbReference>
<dbReference type="GO" id="GO:0033280">
    <property type="term" value="P:response to vitamin D"/>
    <property type="evidence" value="ECO:0007669"/>
    <property type="project" value="Ensembl"/>
</dbReference>
<dbReference type="InterPro" id="IPR002038">
    <property type="entry name" value="Osteopontin"/>
</dbReference>
<dbReference type="InterPro" id="IPR019841">
    <property type="entry name" value="Osteopontin_CS"/>
</dbReference>
<dbReference type="PANTHER" id="PTHR10607">
    <property type="entry name" value="OSTEOPONTIN"/>
    <property type="match status" value="1"/>
</dbReference>
<dbReference type="PANTHER" id="PTHR10607:SF1">
    <property type="entry name" value="OSTEOPONTIN"/>
    <property type="match status" value="1"/>
</dbReference>
<dbReference type="Pfam" id="PF00865">
    <property type="entry name" value="Osteopontin"/>
    <property type="match status" value="1"/>
</dbReference>
<dbReference type="PRINTS" id="PR00216">
    <property type="entry name" value="OSTEOPONTIN"/>
</dbReference>
<dbReference type="SMART" id="SM00017">
    <property type="entry name" value="OSTEO"/>
    <property type="match status" value="1"/>
</dbReference>
<dbReference type="PROSITE" id="PS00884">
    <property type="entry name" value="OSTEOPONTIN"/>
    <property type="match status" value="1"/>
</dbReference>
<organism>
    <name type="scientific">Sus scrofa</name>
    <name type="common">Pig</name>
    <dbReference type="NCBI Taxonomy" id="9823"/>
    <lineage>
        <taxon>Eukaryota</taxon>
        <taxon>Metazoa</taxon>
        <taxon>Chordata</taxon>
        <taxon>Craniata</taxon>
        <taxon>Vertebrata</taxon>
        <taxon>Euteleostomi</taxon>
        <taxon>Mammalia</taxon>
        <taxon>Eutheria</taxon>
        <taxon>Laurasiatheria</taxon>
        <taxon>Artiodactyla</taxon>
        <taxon>Suina</taxon>
        <taxon>Suidae</taxon>
        <taxon>Sus</taxon>
    </lineage>
</organism>
<sequence length="303" mass="33669">MRIAVIAFCLWGFASALPVKQTNSGSSEEKLLSNKYTDAVATLLKPDPSQKQTFLAPQNTISSEETDDFKQETLPSKSNESPEQTDDVDDDDDEDHVDSRDTDSEEADHADDADRSDESHHSDESDELVTDFPTDTPATDVTPAVPTGDPNDGRGDSVVYGLRSKSKKFRRSEAQQLDATEEDLTSHVESEETDGTPKAILVAQRLHVASDLDSQEKDSQETSQPDDRSVETRSQEQSKEYTIKTYDGSNEHSNVIESQENPKVSQEFHSHEDKLVPDSKSEEDKHLKLRVSHELESASSEIN</sequence>
<reference key="1">
    <citation type="journal article" date="1989" name="Nucleic Acids Res.">
        <title>Full length cDNA sequence of porcine secreted phosphoprotein-I (SPP-I, osteopontin).</title>
        <authorList>
            <person name="Wrana J.L."/>
            <person name="Zhang Q."/>
            <person name="Sodek J."/>
        </authorList>
    </citation>
    <scope>NUCLEOTIDE SEQUENCE [MRNA]</scope>
    <source>
        <tissue>Bone</tissue>
    </source>
</reference>
<reference key="2">
    <citation type="journal article" date="1992" name="Eur. J. Biochem.">
        <title>Characterization of the promoter region of the porcine opn (osteopontin, secreted phosphoprotein 1) gene. Identification of positive and negative regulatory elements and a 'silent' second promoter.</title>
        <authorList>
            <person name="Zhang Q."/>
            <person name="Wrana J.L."/>
            <person name="Sodek J."/>
        </authorList>
    </citation>
    <scope>NUCLEOTIDE SEQUENCE [GENOMIC DNA] OF 1-18</scope>
</reference>
<reference key="3">
    <citation type="journal article" date="1990" name="J. Biol. Chem.">
        <title>Characterization of fetal porcine bone sialoproteins, secreted phosphoprotein I (SPPI, osteopontin), bone sialoprotein, and a 23-kDa glycoprotein. Demonstration that the 23-kDa glycoprotein is derived from the carboxyl terminus of SPPI.</title>
        <authorList>
            <person name="Zhang Q."/>
            <person name="Domenicucci C."/>
            <person name="Goldberg H.A."/>
            <person name="Wrana J.L."/>
            <person name="Sodek J."/>
        </authorList>
    </citation>
    <scope>PROTEIN SEQUENCE OF 17-36 AND 172-211</scope>
    <source>
        <tissue>Bone</tissue>
    </source>
</reference>
<comment type="function">
    <text evidence="4">Major non-collagenous bone protein that binds tightly to hydroxyapatite. Appears to form an integral part of the mineralized matrix. Probably important to cell-matrix interaction.</text>
</comment>
<comment type="function">
    <text evidence="3">Acts as a cytokine involved in enhancing production of interferon-gamma and interleukin-12 and reducing production of interleukin-10 and is essential in the pathway that leads to type I immunity.</text>
</comment>
<comment type="subunit">
    <text evidence="3">Interacts (via N-terminus) with integrin ITGA9:ITGB1.</text>
</comment>
<comment type="subcellular location">
    <subcellularLocation>
        <location evidence="2">Secreted</location>
    </subcellularLocation>
</comment>
<comment type="PTM">
    <text evidence="2 3">Extensively phosphorylated by FAM20C in the extracellular medium at multiple sites within the S-x-E/pS motif (By similarity). The phosphorylated form inhibits hydroxyapatite crystallization. Dephosphorylation via a mechanism involving ALPL/TNAP promotes hydroxyapatite crystallization (By similarity).</text>
</comment>
<comment type="PTM">
    <text evidence="2">O-glycosylated.</text>
</comment>
<comment type="PTM">
    <text evidence="4">Forms covalent cross-links mediated by transglutaminase TGM2, between a glutamine and the epsilon-amino group of a lysine residue, forming homopolymers and heteropolymers, increasing its collagen binding properties.</text>
</comment>
<comment type="similarity">
    <text evidence="7">Belongs to the osteopontin family.</text>
</comment>
<feature type="signal peptide" evidence="5">
    <location>
        <begin position="1"/>
        <end position="16"/>
    </location>
</feature>
<feature type="chain" id="PRO_0000020323" description="Osteopontin">
    <location>
        <begin position="17"/>
        <end position="303"/>
    </location>
</feature>
<feature type="region of interest" description="Disordered" evidence="6">
    <location>
        <begin position="45"/>
        <end position="303"/>
    </location>
</feature>
<feature type="short sequence motif" description="Cell attachment site">
    <location>
        <begin position="154"/>
        <end position="156"/>
    </location>
</feature>
<feature type="compositionally biased region" description="Polar residues" evidence="6">
    <location>
        <begin position="49"/>
        <end position="63"/>
    </location>
</feature>
<feature type="compositionally biased region" description="Polar residues" evidence="6">
    <location>
        <begin position="73"/>
        <end position="82"/>
    </location>
</feature>
<feature type="compositionally biased region" description="Acidic residues" evidence="6">
    <location>
        <begin position="83"/>
        <end position="96"/>
    </location>
</feature>
<feature type="compositionally biased region" description="Basic and acidic residues" evidence="6">
    <location>
        <begin position="110"/>
        <end position="123"/>
    </location>
</feature>
<feature type="compositionally biased region" description="Low complexity" evidence="6">
    <location>
        <begin position="130"/>
        <end position="147"/>
    </location>
</feature>
<feature type="compositionally biased region" description="Basic and acidic residues" evidence="6">
    <location>
        <begin position="208"/>
        <end position="242"/>
    </location>
</feature>
<feature type="compositionally biased region" description="Polar residues" evidence="6">
    <location>
        <begin position="247"/>
        <end position="264"/>
    </location>
</feature>
<feature type="compositionally biased region" description="Basic and acidic residues" evidence="6">
    <location>
        <begin position="266"/>
        <end position="296"/>
    </location>
</feature>
<feature type="modified residue" description="Phosphoserine" evidence="4">
    <location>
        <position position="24"/>
    </location>
</feature>
<feature type="modified residue" description="Phosphoserine" evidence="2">
    <location>
        <position position="26"/>
    </location>
</feature>
<feature type="modified residue" description="Phosphoserine" evidence="2">
    <location>
        <position position="27"/>
    </location>
</feature>
<feature type="modified residue" description="Phosphoserine" evidence="2">
    <location>
        <position position="62"/>
    </location>
</feature>
<feature type="modified residue" description="Phosphoserine" evidence="2">
    <location>
        <position position="63"/>
    </location>
</feature>
<feature type="modified residue" description="Phosphothreonine" evidence="2">
    <location>
        <position position="66"/>
    </location>
</feature>
<feature type="modified residue" description="Phosphoserine" evidence="4">
    <location>
        <position position="76"/>
    </location>
</feature>
<feature type="modified residue" description="Phosphoserine" evidence="4">
    <location>
        <position position="78"/>
    </location>
</feature>
<feature type="modified residue" description="Phosphoserine" evidence="4">
    <location>
        <position position="81"/>
    </location>
</feature>
<feature type="modified residue" description="Phosphoserine" evidence="4">
    <location>
        <position position="104"/>
    </location>
</feature>
<feature type="modified residue" description="Phosphoserine" evidence="4">
    <location>
        <position position="116"/>
    </location>
</feature>
<feature type="modified residue" description="Phosphoserine" evidence="2">
    <location>
        <position position="119"/>
    </location>
</feature>
<feature type="modified residue" description="Phosphoserine" evidence="4">
    <location>
        <position position="122"/>
    </location>
</feature>
<feature type="modified residue" description="Phosphoserine" evidence="4">
    <location>
        <position position="125"/>
    </location>
</feature>
<feature type="modified residue" description="Phosphothreonine" evidence="4">
    <location>
        <position position="180"/>
    </location>
</feature>
<feature type="modified residue" description="Phosphothreonine" evidence="2">
    <location>
        <position position="185"/>
    </location>
</feature>
<feature type="modified residue" description="Phosphoserine" evidence="2">
    <location>
        <position position="186"/>
    </location>
</feature>
<feature type="modified residue" description="Phosphoserine" evidence="2">
    <location>
        <position position="190"/>
    </location>
</feature>
<feature type="modified residue" description="Phosphoserine" evidence="2">
    <location>
        <position position="210"/>
    </location>
</feature>
<feature type="modified residue" description="Phosphoserine" evidence="2">
    <location>
        <position position="214"/>
    </location>
</feature>
<feature type="modified residue" description="Phosphoserine" evidence="2">
    <location>
        <position position="219"/>
    </location>
</feature>
<feature type="modified residue" description="Phosphoserine" evidence="2">
    <location>
        <position position="223"/>
    </location>
</feature>
<feature type="modified residue" description="Phosphoserine" evidence="2">
    <location>
        <position position="229"/>
    </location>
</feature>
<feature type="modified residue" description="Phosphothreonine" evidence="2">
    <location>
        <position position="232"/>
    </location>
</feature>
<feature type="modified residue" description="Phosphoserine" evidence="2">
    <location>
        <position position="234"/>
    </location>
</feature>
<feature type="modified residue" description="Phosphoserine" evidence="2">
    <location>
        <position position="238"/>
    </location>
</feature>
<feature type="modified residue" description="Phosphoserine" evidence="2">
    <location>
        <position position="249"/>
    </location>
</feature>
<feature type="modified residue" description="Phosphoserine" evidence="2">
    <location>
        <position position="253"/>
    </location>
</feature>
<feature type="modified residue" description="Phosphoserine" evidence="2">
    <location>
        <position position="258"/>
    </location>
</feature>
<feature type="modified residue" description="Phosphoserine" evidence="2">
    <location>
        <position position="265"/>
    </location>
</feature>
<feature type="modified residue" description="Phosphoserine" evidence="2">
    <location>
        <position position="270"/>
    </location>
</feature>
<feature type="modified residue" description="Phosphoserine" evidence="2">
    <location>
        <position position="281"/>
    </location>
</feature>
<feature type="modified residue" description="Phosphoserine" evidence="2">
    <location>
        <position position="292"/>
    </location>
</feature>
<feature type="modified residue" description="Phosphoserine" evidence="2">
    <location>
        <position position="297"/>
    </location>
</feature>
<feature type="modified residue" description="Phosphoserine" evidence="2">
    <location>
        <position position="299"/>
    </location>
</feature>
<feature type="modified residue" description="Phosphoserine" evidence="2">
    <location>
        <position position="300"/>
    </location>
</feature>
<feature type="glycosylation site" description="O-linked (GalNAc...) threonine" evidence="1">
    <location>
        <position position="130"/>
    </location>
</feature>
<feature type="glycosylation site" description="O-linked (GalNAc...) threonine" evidence="1">
    <location>
        <position position="134"/>
    </location>
</feature>
<feature type="glycosylation site" description="O-linked (GalNAc...) threonine" evidence="1">
    <location>
        <position position="139"/>
    </location>
</feature>
<feature type="glycosylation site" description="O-linked (GalNAc...) threonine" evidence="1">
    <location>
        <position position="142"/>
    </location>
</feature>
<feature type="glycosylation site" description="O-linked (GalNAc...) threonine" evidence="1">
    <location>
        <position position="147"/>
    </location>
</feature>
<feature type="glycosylation site" description="O-linked (Xyl...) (chondroitin sulfate) serine" evidence="2">
    <location>
        <position position="229"/>
    </location>
</feature>
<feature type="glycosylation site" description="O-linked (Xyl...) (chondroitin sulfate) serine" evidence="2">
    <location>
        <position position="297"/>
    </location>
</feature>
<evidence type="ECO:0000250" key="1"/>
<evidence type="ECO:0000250" key="2">
    <source>
        <dbReference type="UniProtKB" id="P10451"/>
    </source>
</evidence>
<evidence type="ECO:0000250" key="3">
    <source>
        <dbReference type="UniProtKB" id="P10923"/>
    </source>
</evidence>
<evidence type="ECO:0000250" key="4">
    <source>
        <dbReference type="UniProtKB" id="P31096"/>
    </source>
</evidence>
<evidence type="ECO:0000255" key="5"/>
<evidence type="ECO:0000256" key="6">
    <source>
        <dbReference type="SAM" id="MobiDB-lite"/>
    </source>
</evidence>
<evidence type="ECO:0000305" key="7"/>
<protein>
    <recommendedName>
        <fullName>Osteopontin</fullName>
    </recommendedName>
    <alternativeName>
        <fullName>Bone sialoprotein 1</fullName>
    </alternativeName>
    <alternativeName>
        <fullName>Secreted phosphoprotein 1</fullName>
        <shortName>SPP-1</shortName>
    </alternativeName>
</protein>